<proteinExistence type="predicted"/>
<feature type="chain" id="PRO_0000099737" description="Uncharacterized protein FPV250">
    <location>
        <begin position="1"/>
        <end position="140"/>
    </location>
</feature>
<sequence>MDRNINLPEEELKYIKECCEVLYLPQPTRMDIIGVMNDSDISWNENLIILMSEDGKIYVYDDEALYKVADTMEEFSEIGLINLGNEVYHCREDIKPLPEEDRDKDEYIMKIREKARQLIDNSQKDFEAILDSLENKHVSI</sequence>
<organism>
    <name type="scientific">Fowlpox virus (strain NVSL)</name>
    <name type="common">FPV</name>
    <dbReference type="NCBI Taxonomy" id="928301"/>
    <lineage>
        <taxon>Viruses</taxon>
        <taxon>Varidnaviria</taxon>
        <taxon>Bamfordvirae</taxon>
        <taxon>Nucleocytoviricota</taxon>
        <taxon>Pokkesviricetes</taxon>
        <taxon>Chitovirales</taxon>
        <taxon>Poxviridae</taxon>
        <taxon>Chordopoxvirinae</taxon>
        <taxon>Avipoxvirus</taxon>
        <taxon>Fowlpox virus</taxon>
    </lineage>
</organism>
<name>V250_FOWPN</name>
<protein>
    <recommendedName>
        <fullName>Uncharacterized protein FPV250</fullName>
    </recommendedName>
    <alternativeName>
        <fullName>BamHI-ORF4</fullName>
    </alternativeName>
</protein>
<accession>P14362</accession>
<gene>
    <name type="ordered locus">FPV250</name>
</gene>
<organismHost>
    <name type="scientific">Vertebrata</name>
    <dbReference type="NCBI Taxonomy" id="7742"/>
</organismHost>
<dbReference type="EMBL" id="D00295">
    <property type="protein sequence ID" value="BAA00196.1"/>
    <property type="molecule type" value="Genomic_DNA"/>
</dbReference>
<dbReference type="EMBL" id="AF198100">
    <property type="protein sequence ID" value="AAF44594.1"/>
    <property type="molecule type" value="Genomic_DNA"/>
</dbReference>
<dbReference type="PIR" id="D29963">
    <property type="entry name" value="WMVZF4"/>
</dbReference>
<dbReference type="RefSeq" id="NP_039213.1">
    <property type="nucleotide sequence ID" value="NC_002188.1"/>
</dbReference>
<dbReference type="GeneID" id="1486822"/>
<dbReference type="KEGG" id="vg:1486822"/>
<dbReference type="Proteomes" id="UP000008597">
    <property type="component" value="Segment"/>
</dbReference>
<dbReference type="InterPro" id="IPR003360">
    <property type="entry name" value="US22-like"/>
</dbReference>
<dbReference type="Pfam" id="PF02393">
    <property type="entry name" value="US22"/>
    <property type="match status" value="1"/>
</dbReference>
<reference key="1">
    <citation type="journal article" date="1988" name="J. Gen. Virol.">
        <title>Sequence analysis of an 11.2 kilobase, near-terminal, BamHI fragment of fowlpox virus.</title>
        <authorList>
            <person name="Tomley F."/>
            <person name="Binns M."/>
            <person name="Campbell J."/>
            <person name="Boursnell M.E.G."/>
        </authorList>
    </citation>
    <scope>NUCLEOTIDE SEQUENCE [GENOMIC DNA]</scope>
    <source>
        <strain>FP-9 / Isolate HP-438</strain>
    </source>
</reference>
<reference key="2">
    <citation type="journal article" date="2000" name="J. Virol.">
        <title>The genome of fowlpox virus.</title>
        <authorList>
            <person name="Afonso C.L."/>
            <person name="Tulman E.R."/>
            <person name="Lu Z."/>
            <person name="Zsak L."/>
            <person name="Kutish G.F."/>
            <person name="Rock D.L."/>
        </authorList>
    </citation>
    <scope>NUCLEOTIDE SEQUENCE [LARGE SCALE GENOMIC DNA]</scope>
</reference>
<keyword id="KW-0244">Early protein</keyword>
<keyword id="KW-1185">Reference proteome</keyword>